<evidence type="ECO:0000255" key="1">
    <source>
        <dbReference type="HAMAP-Rule" id="MF_00791"/>
    </source>
</evidence>
<dbReference type="EMBL" id="CP001144">
    <property type="protein sequence ID" value="ACH75172.1"/>
    <property type="molecule type" value="Genomic_DNA"/>
</dbReference>
<dbReference type="RefSeq" id="WP_000610894.1">
    <property type="nucleotide sequence ID" value="NC_011205.1"/>
</dbReference>
<dbReference type="SMR" id="B5FI33"/>
<dbReference type="GeneID" id="66754612"/>
<dbReference type="KEGG" id="sed:SeD_A0093"/>
<dbReference type="HOGENOM" id="CLU_128074_0_0_6"/>
<dbReference type="Proteomes" id="UP000008322">
    <property type="component" value="Chromosome"/>
</dbReference>
<dbReference type="GO" id="GO:0070987">
    <property type="term" value="P:error-free translesion synthesis"/>
    <property type="evidence" value="ECO:0007669"/>
    <property type="project" value="TreeGrafter"/>
</dbReference>
<dbReference type="Gene3D" id="2.60.40.1470">
    <property type="entry name" value="ApaG domain"/>
    <property type="match status" value="1"/>
</dbReference>
<dbReference type="HAMAP" id="MF_00791">
    <property type="entry name" value="ApaG"/>
    <property type="match status" value="1"/>
</dbReference>
<dbReference type="InterPro" id="IPR007474">
    <property type="entry name" value="ApaG_domain"/>
</dbReference>
<dbReference type="InterPro" id="IPR036767">
    <property type="entry name" value="ApaG_sf"/>
</dbReference>
<dbReference type="InterPro" id="IPR023065">
    <property type="entry name" value="Uncharacterised_ApaG"/>
</dbReference>
<dbReference type="NCBIfam" id="NF003967">
    <property type="entry name" value="PRK05461.1"/>
    <property type="match status" value="1"/>
</dbReference>
<dbReference type="PANTHER" id="PTHR14289">
    <property type="entry name" value="F-BOX ONLY PROTEIN 3"/>
    <property type="match status" value="1"/>
</dbReference>
<dbReference type="PANTHER" id="PTHR14289:SF16">
    <property type="entry name" value="POLYMERASE DELTA-INTERACTING PROTEIN 2"/>
    <property type="match status" value="1"/>
</dbReference>
<dbReference type="Pfam" id="PF04379">
    <property type="entry name" value="DUF525"/>
    <property type="match status" value="1"/>
</dbReference>
<dbReference type="SUPFAM" id="SSF110069">
    <property type="entry name" value="ApaG-like"/>
    <property type="match status" value="1"/>
</dbReference>
<dbReference type="PROSITE" id="PS51087">
    <property type="entry name" value="APAG"/>
    <property type="match status" value="1"/>
</dbReference>
<name>APAG_SALDC</name>
<proteinExistence type="inferred from homology"/>
<sequence length="125" mass="13924">MINSPRVCIQVQSVYIEAQSSPDDERYVFAYTVTIRNLGRAPVQLLGRYWLITNGHGRETEVQGEGVVGVQPRIAPGEEYQYTSGAVIETPLGTMQGHYEMIDENGDAFTIDIPVFRLAVPTLIH</sequence>
<organism>
    <name type="scientific">Salmonella dublin (strain CT_02021853)</name>
    <dbReference type="NCBI Taxonomy" id="439851"/>
    <lineage>
        <taxon>Bacteria</taxon>
        <taxon>Pseudomonadati</taxon>
        <taxon>Pseudomonadota</taxon>
        <taxon>Gammaproteobacteria</taxon>
        <taxon>Enterobacterales</taxon>
        <taxon>Enterobacteriaceae</taxon>
        <taxon>Salmonella</taxon>
    </lineage>
</organism>
<protein>
    <recommendedName>
        <fullName evidence="1">Protein ApaG</fullName>
    </recommendedName>
</protein>
<gene>
    <name evidence="1" type="primary">apaG</name>
    <name type="ordered locus">SeD_A0093</name>
</gene>
<feature type="chain" id="PRO_1000133808" description="Protein ApaG">
    <location>
        <begin position="1"/>
        <end position="125"/>
    </location>
</feature>
<feature type="domain" description="ApaG" evidence="1">
    <location>
        <begin position="1"/>
        <end position="125"/>
    </location>
</feature>
<accession>B5FI33</accession>
<reference key="1">
    <citation type="journal article" date="2011" name="J. Bacteriol.">
        <title>Comparative genomics of 28 Salmonella enterica isolates: evidence for CRISPR-mediated adaptive sublineage evolution.</title>
        <authorList>
            <person name="Fricke W.F."/>
            <person name="Mammel M.K."/>
            <person name="McDermott P.F."/>
            <person name="Tartera C."/>
            <person name="White D.G."/>
            <person name="Leclerc J.E."/>
            <person name="Ravel J."/>
            <person name="Cebula T.A."/>
        </authorList>
    </citation>
    <scope>NUCLEOTIDE SEQUENCE [LARGE SCALE GENOMIC DNA]</scope>
    <source>
        <strain>CT_02021853</strain>
    </source>
</reference>